<reference key="1">
    <citation type="submission" date="2005-03" db="EMBL/GenBank/DDBJ databases">
        <title>Annotation of the Saccharomyces cerevisiae RM11-1a genome.</title>
        <authorList>
            <consortium name="The Broad Institute Genome Sequencing Platform"/>
            <person name="Birren B.W."/>
            <person name="Lander E.S."/>
            <person name="Galagan J.E."/>
            <person name="Nusbaum C."/>
            <person name="Devon K."/>
            <person name="Cuomo C."/>
            <person name="Jaffe D.B."/>
            <person name="Butler J."/>
            <person name="Alvarez P."/>
            <person name="Gnerre S."/>
            <person name="Grabherr M."/>
            <person name="Kleber M."/>
            <person name="Mauceli E.W."/>
            <person name="Brockman W."/>
            <person name="MacCallum I.A."/>
            <person name="Rounsley S."/>
            <person name="Young S.K."/>
            <person name="LaButti K."/>
            <person name="Pushparaj V."/>
            <person name="DeCaprio D."/>
            <person name="Crawford M."/>
            <person name="Koehrsen M."/>
            <person name="Engels R."/>
            <person name="Montgomery P."/>
            <person name="Pearson M."/>
            <person name="Howarth C."/>
            <person name="Larson L."/>
            <person name="Luoma S."/>
            <person name="White J."/>
            <person name="O'Leary S."/>
            <person name="Kodira C.D."/>
            <person name="Zeng Q."/>
            <person name="Yandava C."/>
            <person name="Alvarado L."/>
            <person name="Pratt S."/>
            <person name="Kruglyak L."/>
        </authorList>
    </citation>
    <scope>NUCLEOTIDE SEQUENCE [LARGE SCALE GENOMIC DNA]</scope>
    <source>
        <strain>RM11-1a</strain>
    </source>
</reference>
<dbReference type="EMBL" id="CH408054">
    <property type="protein sequence ID" value="EDV09267.1"/>
    <property type="molecule type" value="Genomic_DNA"/>
</dbReference>
<dbReference type="SMR" id="B3LTC4"/>
<dbReference type="HOGENOM" id="CLU_127260_0_0_1"/>
<dbReference type="OrthoDB" id="21486at4893"/>
<dbReference type="Proteomes" id="UP000008335">
    <property type="component" value="Unassembled WGS sequence"/>
</dbReference>
<dbReference type="GO" id="GO:0005886">
    <property type="term" value="C:plasma membrane"/>
    <property type="evidence" value="ECO:0007669"/>
    <property type="project" value="TreeGrafter"/>
</dbReference>
<dbReference type="GO" id="GO:0015250">
    <property type="term" value="F:water channel activity"/>
    <property type="evidence" value="ECO:0007669"/>
    <property type="project" value="TreeGrafter"/>
</dbReference>
<dbReference type="FunFam" id="1.20.1080.10:FF:000048">
    <property type="entry name" value="Putative uncharacterized protein YLL053C"/>
    <property type="match status" value="1"/>
</dbReference>
<dbReference type="Gene3D" id="1.20.1080.10">
    <property type="entry name" value="Glycerol uptake facilitator protein"/>
    <property type="match status" value="1"/>
</dbReference>
<dbReference type="InterPro" id="IPR023271">
    <property type="entry name" value="Aquaporin-like"/>
</dbReference>
<dbReference type="InterPro" id="IPR034294">
    <property type="entry name" value="Aquaporin_transptr"/>
</dbReference>
<dbReference type="InterPro" id="IPR000425">
    <property type="entry name" value="MIP"/>
</dbReference>
<dbReference type="PANTHER" id="PTHR19139">
    <property type="entry name" value="AQUAPORIN TRANSPORTER"/>
    <property type="match status" value="1"/>
</dbReference>
<dbReference type="PANTHER" id="PTHR19139:SF199">
    <property type="entry name" value="MIP17260P"/>
    <property type="match status" value="1"/>
</dbReference>
<dbReference type="Pfam" id="PF00230">
    <property type="entry name" value="MIP"/>
    <property type="match status" value="1"/>
</dbReference>
<dbReference type="PRINTS" id="PR00783">
    <property type="entry name" value="MINTRINSICP"/>
</dbReference>
<dbReference type="SUPFAM" id="SSF81338">
    <property type="entry name" value="Aquaporin-like"/>
    <property type="match status" value="1"/>
</dbReference>
<proteinExistence type="uncertain"/>
<feature type="chain" id="PRO_0000391657" description="Putative uncharacterized protein SCRG_04940">
    <location>
        <begin position="1"/>
        <end position="152"/>
    </location>
</feature>
<feature type="topological domain" description="Cytoplasmic" evidence="1">
    <location>
        <begin position="1"/>
        <end position="5"/>
    </location>
</feature>
<feature type="transmembrane region" description="Helical" evidence="2">
    <location>
        <begin position="6"/>
        <end position="26"/>
    </location>
</feature>
<feature type="topological domain" description="Extracellular" evidence="1">
    <location>
        <begin position="27"/>
        <end position="38"/>
    </location>
</feature>
<feature type="transmembrane region" description="Helical" evidence="2">
    <location>
        <begin position="39"/>
        <end position="59"/>
    </location>
</feature>
<feature type="topological domain" description="Cytoplasmic" evidence="1">
    <location>
        <begin position="60"/>
        <end position="65"/>
    </location>
</feature>
<feature type="transmembrane region" description="Helical" evidence="2">
    <location>
        <begin position="66"/>
        <end position="86"/>
    </location>
</feature>
<feature type="topological domain" description="Extracellular" evidence="1">
    <location>
        <begin position="87"/>
        <end position="110"/>
    </location>
</feature>
<feature type="transmembrane region" description="Helical" evidence="2">
    <location>
        <begin position="111"/>
        <end position="131"/>
    </location>
</feature>
<feature type="topological domain" description="Cytoplasmic" evidence="1">
    <location>
        <begin position="132"/>
        <end position="152"/>
    </location>
</feature>
<feature type="short sequence motif" description="NPA">
    <location>
        <begin position="92"/>
        <end position="94"/>
    </location>
</feature>
<protein>
    <recommendedName>
        <fullName>Putative uncharacterized protein SCRG_04940</fullName>
    </recommendedName>
</protein>
<accession>B3LTC4</accession>
<organism>
    <name type="scientific">Saccharomyces cerevisiae (strain RM11-1a)</name>
    <name type="common">Baker's yeast</name>
    <dbReference type="NCBI Taxonomy" id="285006"/>
    <lineage>
        <taxon>Eukaryota</taxon>
        <taxon>Fungi</taxon>
        <taxon>Dikarya</taxon>
        <taxon>Ascomycota</taxon>
        <taxon>Saccharomycotina</taxon>
        <taxon>Saccharomycetes</taxon>
        <taxon>Saccharomycetales</taxon>
        <taxon>Saccharomycetaceae</taxon>
        <taxon>Saccharomyces</taxon>
    </lineage>
</organism>
<gene>
    <name type="ORF">SCRG_04940</name>
</gene>
<comment type="subcellular location">
    <subcellularLocation>
        <location evidence="3">Membrane</location>
        <topology evidence="3">Multi-pass membrane protein</topology>
    </subcellularLocation>
</comment>
<comment type="similarity">
    <text evidence="3">Belongs to the MIP/aquaporin (TC 1.A.8) family.</text>
</comment>
<comment type="caution">
    <text evidence="3">Could be the product of a pseudogene. This is the C-terminal part of aquaporin-2. A natural 11 bp deletion in position 109 leads to a frameshift, which disrupts the gene coding for this protein and produces two ORFs SCRG_04941 and SCRG_04940. A contiguous sequence for aquaporin-2 can be found in strain Sigma 1278B (AC P0CD89).</text>
</comment>
<evidence type="ECO:0000250" key="1"/>
<evidence type="ECO:0000255" key="2"/>
<evidence type="ECO:0000305" key="3"/>
<sequence>MWFPQIIAGMAAGGAASAMTPGKVLFTNALGLGCSRSRGLFLEMFGTAVLCLTVLMTAVEKRETNFMAALPIGISLFMAHMALTGYTGTGVNPARSLGAAVAARYFPHYHWIYWISPLLGAFLAWSVWQLLQILDYTTYVNAEKAAGQKKED</sequence>
<keyword id="KW-0472">Membrane</keyword>
<keyword id="KW-0812">Transmembrane</keyword>
<keyword id="KW-1133">Transmembrane helix</keyword>
<name>YLL53_YEAS1</name>